<proteinExistence type="inferred from homology"/>
<name>LOLD_BORBR</name>
<protein>
    <recommendedName>
        <fullName evidence="1">Lipoprotein-releasing system ATP-binding protein LolD</fullName>
        <ecNumber evidence="1">7.6.2.-</ecNumber>
    </recommendedName>
</protein>
<accession>Q7WK40</accession>
<evidence type="ECO:0000255" key="1">
    <source>
        <dbReference type="HAMAP-Rule" id="MF_01708"/>
    </source>
</evidence>
<sequence length="231" mass="25028">MTEPNDTGPALQAEHLGKVYDEGPARIEVLSDVSLSVARGEMVAIVGASGSGKSTLLHILGLLDVPSSGTVSVDGVPAAGLSEKRKSALRNRSLGFVYQFHHLLPEFSALDNVAMPLIVRRENRDRARAQAREVLELVGLAAREEHFPGQLSGGERQRVALARALVTRPACVLADEPTGNLDRHTAHNMFELLTRVNRESGTAFVIVTHDPELAARADRQLHMENGRLQPD</sequence>
<comment type="function">
    <text evidence="1">Part of the ABC transporter complex LolCDE involved in the translocation of mature outer membrane-directed lipoproteins, from the inner membrane to the periplasmic chaperone, LolA. Responsible for the formation of the LolA-lipoprotein complex in an ATP-dependent manner.</text>
</comment>
<comment type="subunit">
    <text evidence="1">The complex is composed of two ATP-binding proteins (LolD) and two transmembrane proteins (LolC and LolE).</text>
</comment>
<comment type="subcellular location">
    <subcellularLocation>
        <location evidence="1">Cell inner membrane</location>
        <topology evidence="1">Peripheral membrane protein</topology>
    </subcellularLocation>
</comment>
<comment type="similarity">
    <text evidence="1">Belongs to the ABC transporter superfamily. Lipoprotein translocase (TC 3.A.1.125) family.</text>
</comment>
<keyword id="KW-0067">ATP-binding</keyword>
<keyword id="KW-0997">Cell inner membrane</keyword>
<keyword id="KW-1003">Cell membrane</keyword>
<keyword id="KW-0472">Membrane</keyword>
<keyword id="KW-0547">Nucleotide-binding</keyword>
<keyword id="KW-1278">Translocase</keyword>
<keyword id="KW-0813">Transport</keyword>
<organism>
    <name type="scientific">Bordetella bronchiseptica (strain ATCC BAA-588 / NCTC 13252 / RB50)</name>
    <name type="common">Alcaligenes bronchisepticus</name>
    <dbReference type="NCBI Taxonomy" id="257310"/>
    <lineage>
        <taxon>Bacteria</taxon>
        <taxon>Pseudomonadati</taxon>
        <taxon>Pseudomonadota</taxon>
        <taxon>Betaproteobacteria</taxon>
        <taxon>Burkholderiales</taxon>
        <taxon>Alcaligenaceae</taxon>
        <taxon>Bordetella</taxon>
    </lineage>
</organism>
<dbReference type="EC" id="7.6.2.-" evidence="1"/>
<dbReference type="EMBL" id="BX640443">
    <property type="protein sequence ID" value="CAE32795.1"/>
    <property type="molecule type" value="Genomic_DNA"/>
</dbReference>
<dbReference type="RefSeq" id="WP_003812422.1">
    <property type="nucleotide sequence ID" value="NC_002927.3"/>
</dbReference>
<dbReference type="SMR" id="Q7WK40"/>
<dbReference type="GeneID" id="93203825"/>
<dbReference type="KEGG" id="bbr:BB2299"/>
<dbReference type="eggNOG" id="COG1136">
    <property type="taxonomic scope" value="Bacteria"/>
</dbReference>
<dbReference type="HOGENOM" id="CLU_000604_1_22_4"/>
<dbReference type="Proteomes" id="UP000001027">
    <property type="component" value="Chromosome"/>
</dbReference>
<dbReference type="GO" id="GO:0005886">
    <property type="term" value="C:plasma membrane"/>
    <property type="evidence" value="ECO:0007669"/>
    <property type="project" value="UniProtKB-SubCell"/>
</dbReference>
<dbReference type="GO" id="GO:0005524">
    <property type="term" value="F:ATP binding"/>
    <property type="evidence" value="ECO:0007669"/>
    <property type="project" value="UniProtKB-KW"/>
</dbReference>
<dbReference type="GO" id="GO:0016887">
    <property type="term" value="F:ATP hydrolysis activity"/>
    <property type="evidence" value="ECO:0007669"/>
    <property type="project" value="InterPro"/>
</dbReference>
<dbReference type="GO" id="GO:0022857">
    <property type="term" value="F:transmembrane transporter activity"/>
    <property type="evidence" value="ECO:0007669"/>
    <property type="project" value="TreeGrafter"/>
</dbReference>
<dbReference type="GO" id="GO:0044874">
    <property type="term" value="P:lipoprotein localization to outer membrane"/>
    <property type="evidence" value="ECO:0007669"/>
    <property type="project" value="TreeGrafter"/>
</dbReference>
<dbReference type="GO" id="GO:0089705">
    <property type="term" value="P:protein localization to outer membrane"/>
    <property type="evidence" value="ECO:0007669"/>
    <property type="project" value="TreeGrafter"/>
</dbReference>
<dbReference type="CDD" id="cd03255">
    <property type="entry name" value="ABC_MJ0796_LolCDE_FtsE"/>
    <property type="match status" value="1"/>
</dbReference>
<dbReference type="FunFam" id="3.40.50.300:FF:000230">
    <property type="entry name" value="Lipoprotein-releasing system ATP-binding protein LolD"/>
    <property type="match status" value="1"/>
</dbReference>
<dbReference type="Gene3D" id="3.40.50.300">
    <property type="entry name" value="P-loop containing nucleotide triphosphate hydrolases"/>
    <property type="match status" value="1"/>
</dbReference>
<dbReference type="InterPro" id="IPR003593">
    <property type="entry name" value="AAA+_ATPase"/>
</dbReference>
<dbReference type="InterPro" id="IPR003439">
    <property type="entry name" value="ABC_transporter-like_ATP-bd"/>
</dbReference>
<dbReference type="InterPro" id="IPR017871">
    <property type="entry name" value="ABC_transporter-like_CS"/>
</dbReference>
<dbReference type="InterPro" id="IPR015854">
    <property type="entry name" value="ABC_transpr_LolD-like"/>
</dbReference>
<dbReference type="InterPro" id="IPR011924">
    <property type="entry name" value="LolD_lipo_ATP-bd"/>
</dbReference>
<dbReference type="InterPro" id="IPR017911">
    <property type="entry name" value="MacB-like_ATP-bd"/>
</dbReference>
<dbReference type="InterPro" id="IPR027417">
    <property type="entry name" value="P-loop_NTPase"/>
</dbReference>
<dbReference type="NCBIfam" id="TIGR02211">
    <property type="entry name" value="LolD_lipo_ex"/>
    <property type="match status" value="1"/>
</dbReference>
<dbReference type="PANTHER" id="PTHR24220">
    <property type="entry name" value="IMPORT ATP-BINDING PROTEIN"/>
    <property type="match status" value="1"/>
</dbReference>
<dbReference type="PANTHER" id="PTHR24220:SF689">
    <property type="entry name" value="LIPOPROTEIN-RELEASING SYSTEM ATP-BINDING PROTEIN LOLD"/>
    <property type="match status" value="1"/>
</dbReference>
<dbReference type="Pfam" id="PF00005">
    <property type="entry name" value="ABC_tran"/>
    <property type="match status" value="1"/>
</dbReference>
<dbReference type="SMART" id="SM00382">
    <property type="entry name" value="AAA"/>
    <property type="match status" value="1"/>
</dbReference>
<dbReference type="SUPFAM" id="SSF52540">
    <property type="entry name" value="P-loop containing nucleoside triphosphate hydrolases"/>
    <property type="match status" value="1"/>
</dbReference>
<dbReference type="PROSITE" id="PS00211">
    <property type="entry name" value="ABC_TRANSPORTER_1"/>
    <property type="match status" value="1"/>
</dbReference>
<dbReference type="PROSITE" id="PS50893">
    <property type="entry name" value="ABC_TRANSPORTER_2"/>
    <property type="match status" value="1"/>
</dbReference>
<dbReference type="PROSITE" id="PS51244">
    <property type="entry name" value="LOLD"/>
    <property type="match status" value="1"/>
</dbReference>
<feature type="chain" id="PRO_0000092419" description="Lipoprotein-releasing system ATP-binding protein LolD">
    <location>
        <begin position="1"/>
        <end position="231"/>
    </location>
</feature>
<feature type="domain" description="ABC transporter" evidence="1">
    <location>
        <begin position="11"/>
        <end position="231"/>
    </location>
</feature>
<feature type="binding site" evidence="1">
    <location>
        <begin position="47"/>
        <end position="54"/>
    </location>
    <ligand>
        <name>ATP</name>
        <dbReference type="ChEBI" id="CHEBI:30616"/>
    </ligand>
</feature>
<gene>
    <name evidence="1" type="primary">lolD</name>
    <name type="ordered locus">BB2299</name>
</gene>
<reference key="1">
    <citation type="journal article" date="2003" name="Nat. Genet.">
        <title>Comparative analysis of the genome sequences of Bordetella pertussis, Bordetella parapertussis and Bordetella bronchiseptica.</title>
        <authorList>
            <person name="Parkhill J."/>
            <person name="Sebaihia M."/>
            <person name="Preston A."/>
            <person name="Murphy L.D."/>
            <person name="Thomson N.R."/>
            <person name="Harris D.E."/>
            <person name="Holden M.T.G."/>
            <person name="Churcher C.M."/>
            <person name="Bentley S.D."/>
            <person name="Mungall K.L."/>
            <person name="Cerdeno-Tarraga A.-M."/>
            <person name="Temple L."/>
            <person name="James K.D."/>
            <person name="Harris B."/>
            <person name="Quail M.A."/>
            <person name="Achtman M."/>
            <person name="Atkin R."/>
            <person name="Baker S."/>
            <person name="Basham D."/>
            <person name="Bason N."/>
            <person name="Cherevach I."/>
            <person name="Chillingworth T."/>
            <person name="Collins M."/>
            <person name="Cronin A."/>
            <person name="Davis P."/>
            <person name="Doggett J."/>
            <person name="Feltwell T."/>
            <person name="Goble A."/>
            <person name="Hamlin N."/>
            <person name="Hauser H."/>
            <person name="Holroyd S."/>
            <person name="Jagels K."/>
            <person name="Leather S."/>
            <person name="Moule S."/>
            <person name="Norberczak H."/>
            <person name="O'Neil S."/>
            <person name="Ormond D."/>
            <person name="Price C."/>
            <person name="Rabbinowitsch E."/>
            <person name="Rutter S."/>
            <person name="Sanders M."/>
            <person name="Saunders D."/>
            <person name="Seeger K."/>
            <person name="Sharp S."/>
            <person name="Simmonds M."/>
            <person name="Skelton J."/>
            <person name="Squares R."/>
            <person name="Squares S."/>
            <person name="Stevens K."/>
            <person name="Unwin L."/>
            <person name="Whitehead S."/>
            <person name="Barrell B.G."/>
            <person name="Maskell D.J."/>
        </authorList>
    </citation>
    <scope>NUCLEOTIDE SEQUENCE [LARGE SCALE GENOMIC DNA]</scope>
    <source>
        <strain>ATCC BAA-588 / NCTC 13252 / RB50</strain>
    </source>
</reference>